<gene>
    <name type="primary">cooS2</name>
    <name type="synonym">cooSII</name>
    <name type="ordered locus">CHY_0085</name>
</gene>
<evidence type="ECO:0000269" key="1">
    <source>
    </source>
</evidence>
<evidence type="ECO:0000269" key="2">
    <source>
    </source>
</evidence>
<evidence type="ECO:0000269" key="3">
    <source>
    </source>
</evidence>
<evidence type="ECO:0000269" key="4">
    <source>
    </source>
</evidence>
<evidence type="ECO:0000305" key="5"/>
<evidence type="ECO:0007829" key="6">
    <source>
        <dbReference type="PDB" id="1SU7"/>
    </source>
</evidence>
<evidence type="ECO:0007829" key="7">
    <source>
        <dbReference type="PDB" id="4UDX"/>
    </source>
</evidence>
<evidence type="ECO:0007829" key="8">
    <source>
        <dbReference type="PDB" id="8X9E"/>
    </source>
</evidence>
<evidence type="ECO:0007829" key="9">
    <source>
        <dbReference type="PDB" id="8X9G"/>
    </source>
</evidence>
<organism>
    <name type="scientific">Carboxydothermus hydrogenoformans (strain ATCC BAA-161 / DSM 6008 / Z-2901)</name>
    <dbReference type="NCBI Taxonomy" id="246194"/>
    <lineage>
        <taxon>Bacteria</taxon>
        <taxon>Bacillati</taxon>
        <taxon>Bacillota</taxon>
        <taxon>Clostridia</taxon>
        <taxon>Thermoanaerobacterales</taxon>
        <taxon>Thermoanaerobacteraceae</taxon>
        <taxon>Carboxydothermus</taxon>
    </lineage>
</organism>
<proteinExistence type="evidence at protein level"/>
<comment type="function">
    <text evidence="1">CODH oxidizes carbon monoxide coupled, via CooF, to the reduction of a hydrogen cation by a hydrogenase (possibly CooH).</text>
</comment>
<comment type="catalytic activity">
    <reaction evidence="1 3 4">
        <text>CO + 2 oxidized [2Fe-2S]-[ferredoxin] + H2O = 2 reduced [2Fe-2S]-[ferredoxin] + CO2 + 2 H(+)</text>
        <dbReference type="Rhea" id="RHEA:21040"/>
        <dbReference type="Rhea" id="RHEA-COMP:10000"/>
        <dbReference type="Rhea" id="RHEA-COMP:10001"/>
        <dbReference type="ChEBI" id="CHEBI:15377"/>
        <dbReference type="ChEBI" id="CHEBI:15378"/>
        <dbReference type="ChEBI" id="CHEBI:16526"/>
        <dbReference type="ChEBI" id="CHEBI:17245"/>
        <dbReference type="ChEBI" id="CHEBI:33737"/>
        <dbReference type="ChEBI" id="CHEBI:33738"/>
        <dbReference type="EC" id="1.2.7.4"/>
    </reaction>
</comment>
<comment type="cofactor">
    <cofactor evidence="2">
        <name>[4Fe-4S] cluster</name>
        <dbReference type="ChEBI" id="CHEBI:49883"/>
    </cofactor>
    <text evidence="2">Binds 3 [4Fe-4S] clusters per homodimer.</text>
</comment>
<comment type="cofactor">
    <cofactor evidence="2 3 4">
        <name>[Ni-4Fe-5S] cluster</name>
        <dbReference type="ChEBI" id="CHEBI:177874"/>
    </cofactor>
    <text evidence="2 3 4">Binds 2 [Ni-4Fe-5S] clusters per homodimer.</text>
</comment>
<comment type="activity regulation">
    <text>Inactivated by O(2).</text>
</comment>
<comment type="subunit">
    <text evidence="2">Homodimer.</text>
</comment>
<comment type="subcellular location">
    <subcellularLocation>
        <location evidence="1">Cytoplasm</location>
    </subcellularLocation>
    <subcellularLocation>
        <location evidence="1">Cell membrane</location>
        <topology evidence="1">Peripheral membrane protein</topology>
        <orientation evidence="1">Cytoplasmic side</orientation>
    </subcellularLocation>
    <text>Loosely attached to the membrane, probably via CooF.</text>
</comment>
<comment type="domain">
    <text evidence="2 3 4">Cluster B is an all-cysteinyl-liganded 4Fe-4S cluster; cluster C is a mixed Ni-Fe-S cluster which is the active site of CO oxidation. Cluster D is also an all-cysteinyl-liganded 4Fe-4S cluster that bridges the two subunits of the CODH dimer.</text>
</comment>
<comment type="similarity">
    <text evidence="5">Belongs to the Ni-containing carbon monoxide dehydrogenase family.</text>
</comment>
<dbReference type="EC" id="1.2.7.4" evidence="1 3 4"/>
<dbReference type="EMBL" id="AF249899">
    <property type="protein sequence ID" value="AAG29809.1"/>
    <property type="molecule type" value="Genomic_DNA"/>
</dbReference>
<dbReference type="EMBL" id="CP000141">
    <property type="protein sequence ID" value="ABB15588.1"/>
    <property type="molecule type" value="Genomic_DNA"/>
</dbReference>
<dbReference type="EMBL" id="AF244619">
    <property type="protein sequence ID" value="AAG23568.1"/>
    <property type="molecule type" value="Genomic_DNA"/>
</dbReference>
<dbReference type="RefSeq" id="WP_011343033.1">
    <property type="nucleotide sequence ID" value="NC_007503.1"/>
</dbReference>
<dbReference type="PDB" id="1SU6">
    <property type="method" value="X-ray"/>
    <property type="resolution" value="1.64 A"/>
    <property type="chains" value="A=1-636"/>
</dbReference>
<dbReference type="PDB" id="1SU7">
    <property type="method" value="X-ray"/>
    <property type="resolution" value="1.12 A"/>
    <property type="chains" value="A=1-636"/>
</dbReference>
<dbReference type="PDB" id="1SU8">
    <property type="method" value="X-ray"/>
    <property type="resolution" value="1.10 A"/>
    <property type="chains" value="A=1-636"/>
</dbReference>
<dbReference type="PDB" id="1SUF">
    <property type="method" value="X-ray"/>
    <property type="resolution" value="1.15 A"/>
    <property type="chains" value="A=1-636"/>
</dbReference>
<dbReference type="PDB" id="2YIV">
    <property type="method" value="X-ray"/>
    <property type="resolution" value="1.28 A"/>
    <property type="chains" value="X=1-636"/>
</dbReference>
<dbReference type="PDB" id="3B51">
    <property type="method" value="X-ray"/>
    <property type="resolution" value="1.40 A"/>
    <property type="chains" value="X=4-636"/>
</dbReference>
<dbReference type="PDB" id="3B52">
    <property type="method" value="X-ray"/>
    <property type="resolution" value="1.50 A"/>
    <property type="chains" value="X=4-636"/>
</dbReference>
<dbReference type="PDB" id="3B53">
    <property type="method" value="X-ray"/>
    <property type="resolution" value="1.50 A"/>
    <property type="chains" value="X=4-636"/>
</dbReference>
<dbReference type="PDB" id="3I39">
    <property type="method" value="X-ray"/>
    <property type="resolution" value="1.36 A"/>
    <property type="chains" value="X=1-636"/>
</dbReference>
<dbReference type="PDB" id="4UDX">
    <property type="method" value="X-ray"/>
    <property type="resolution" value="1.03 A"/>
    <property type="chains" value="X=1-636"/>
</dbReference>
<dbReference type="PDB" id="4UDY">
    <property type="method" value="X-ray"/>
    <property type="resolution" value="1.09 A"/>
    <property type="chains" value="X=1-636"/>
</dbReference>
<dbReference type="PDB" id="5FLE">
    <property type="method" value="X-ray"/>
    <property type="resolution" value="1.23 A"/>
    <property type="chains" value="X=4-636"/>
</dbReference>
<dbReference type="PDB" id="7ERR">
    <property type="method" value="X-ray"/>
    <property type="resolution" value="2.26 A"/>
    <property type="chains" value="A=4-636"/>
</dbReference>
<dbReference type="PDB" id="7XDM">
    <property type="method" value="X-ray"/>
    <property type="resolution" value="1.74 A"/>
    <property type="chains" value="A=4-636"/>
</dbReference>
<dbReference type="PDB" id="7XDN">
    <property type="method" value="X-ray"/>
    <property type="resolution" value="1.80 A"/>
    <property type="chains" value="A=4-636"/>
</dbReference>
<dbReference type="PDB" id="7XDP">
    <property type="method" value="X-ray"/>
    <property type="resolution" value="1.84 A"/>
    <property type="chains" value="A=4-636"/>
</dbReference>
<dbReference type="PDB" id="8OMX">
    <property type="method" value="X-ray"/>
    <property type="resolution" value="1.50 A"/>
    <property type="chains" value="X=1-636"/>
</dbReference>
<dbReference type="PDB" id="8OMY">
    <property type="method" value="X-ray"/>
    <property type="resolution" value="1.37 A"/>
    <property type="chains" value="X=1-636"/>
</dbReference>
<dbReference type="PDB" id="8ON0">
    <property type="method" value="X-ray"/>
    <property type="resolution" value="1.29 A"/>
    <property type="chains" value="X=1-636"/>
</dbReference>
<dbReference type="PDB" id="8ON1">
    <property type="method" value="X-ray"/>
    <property type="resolution" value="1.37 A"/>
    <property type="chains" value="X=1-636"/>
</dbReference>
<dbReference type="PDB" id="8ON2">
    <property type="method" value="X-ray"/>
    <property type="resolution" value="1.58 A"/>
    <property type="chains" value="X=1-636"/>
</dbReference>
<dbReference type="PDB" id="8ON3">
    <property type="method" value="X-ray"/>
    <property type="resolution" value="1.74 A"/>
    <property type="chains" value="X=1-636"/>
</dbReference>
<dbReference type="PDB" id="8X9D">
    <property type="method" value="X-ray"/>
    <property type="resolution" value="2.11 A"/>
    <property type="chains" value="A=1-636"/>
</dbReference>
<dbReference type="PDB" id="8X9E">
    <property type="method" value="X-ray"/>
    <property type="resolution" value="2.50 A"/>
    <property type="chains" value="A=1-636"/>
</dbReference>
<dbReference type="PDB" id="8X9F">
    <property type="method" value="X-ray"/>
    <property type="resolution" value="2.48 A"/>
    <property type="chains" value="A=1-636"/>
</dbReference>
<dbReference type="PDB" id="8X9G">
    <property type="method" value="X-ray"/>
    <property type="resolution" value="3.11 A"/>
    <property type="chains" value="A=1-636"/>
</dbReference>
<dbReference type="PDB" id="8X9H">
    <property type="method" value="X-ray"/>
    <property type="resolution" value="2.20 A"/>
    <property type="chains" value="A=1-636"/>
</dbReference>
<dbReference type="PDBsum" id="1SU6"/>
<dbReference type="PDBsum" id="1SU7"/>
<dbReference type="PDBsum" id="1SU8"/>
<dbReference type="PDBsum" id="1SUF"/>
<dbReference type="PDBsum" id="2YIV"/>
<dbReference type="PDBsum" id="3B51"/>
<dbReference type="PDBsum" id="3B52"/>
<dbReference type="PDBsum" id="3B53"/>
<dbReference type="PDBsum" id="3I39"/>
<dbReference type="PDBsum" id="4UDX"/>
<dbReference type="PDBsum" id="4UDY"/>
<dbReference type="PDBsum" id="5FLE"/>
<dbReference type="PDBsum" id="7ERR"/>
<dbReference type="PDBsum" id="7XDM"/>
<dbReference type="PDBsum" id="7XDN"/>
<dbReference type="PDBsum" id="7XDP"/>
<dbReference type="PDBsum" id="8OMX"/>
<dbReference type="PDBsum" id="8OMY"/>
<dbReference type="PDBsum" id="8ON0"/>
<dbReference type="PDBsum" id="8ON1"/>
<dbReference type="PDBsum" id="8ON2"/>
<dbReference type="PDBsum" id="8ON3"/>
<dbReference type="PDBsum" id="8X9D"/>
<dbReference type="PDBsum" id="8X9E"/>
<dbReference type="PDBsum" id="8X9F"/>
<dbReference type="PDBsum" id="8X9G"/>
<dbReference type="PDBsum" id="8X9H"/>
<dbReference type="SMR" id="Q9F8A8"/>
<dbReference type="STRING" id="246194.CHY_0085"/>
<dbReference type="KEGG" id="chy:CHY_0085"/>
<dbReference type="eggNOG" id="COG1151">
    <property type="taxonomic scope" value="Bacteria"/>
</dbReference>
<dbReference type="HOGENOM" id="CLU_030631_0_0_9"/>
<dbReference type="InParanoid" id="Q9F8A8"/>
<dbReference type="OrthoDB" id="5478720at2"/>
<dbReference type="BRENDA" id="1.2.7.4">
    <property type="organism ID" value="1178"/>
</dbReference>
<dbReference type="EvolutionaryTrace" id="Q9F8A8"/>
<dbReference type="Proteomes" id="UP000002706">
    <property type="component" value="Chromosome"/>
</dbReference>
<dbReference type="GO" id="GO:0005737">
    <property type="term" value="C:cytoplasm"/>
    <property type="evidence" value="ECO:0007669"/>
    <property type="project" value="UniProtKB-SubCell"/>
</dbReference>
<dbReference type="GO" id="GO:0005886">
    <property type="term" value="C:plasma membrane"/>
    <property type="evidence" value="ECO:0007669"/>
    <property type="project" value="UniProtKB-SubCell"/>
</dbReference>
<dbReference type="GO" id="GO:0051539">
    <property type="term" value="F:4 iron, 4 sulfur cluster binding"/>
    <property type="evidence" value="ECO:0007669"/>
    <property type="project" value="UniProtKB-KW"/>
</dbReference>
<dbReference type="GO" id="GO:0043885">
    <property type="term" value="F:anaerobic carbon-monoxide dehydrogenase activity"/>
    <property type="evidence" value="ECO:0007669"/>
    <property type="project" value="UniProtKB-EC"/>
</dbReference>
<dbReference type="GO" id="GO:0050418">
    <property type="term" value="F:hydroxylamine reductase activity"/>
    <property type="evidence" value="ECO:0007669"/>
    <property type="project" value="TreeGrafter"/>
</dbReference>
<dbReference type="GO" id="GO:0016151">
    <property type="term" value="F:nickel cation binding"/>
    <property type="evidence" value="ECO:0007669"/>
    <property type="project" value="InterPro"/>
</dbReference>
<dbReference type="GO" id="GO:0004601">
    <property type="term" value="F:peroxidase activity"/>
    <property type="evidence" value="ECO:0007669"/>
    <property type="project" value="TreeGrafter"/>
</dbReference>
<dbReference type="GO" id="GO:0006091">
    <property type="term" value="P:generation of precursor metabolites and energy"/>
    <property type="evidence" value="ECO:0007669"/>
    <property type="project" value="InterPro"/>
</dbReference>
<dbReference type="GO" id="GO:0042542">
    <property type="term" value="P:response to hydrogen peroxide"/>
    <property type="evidence" value="ECO:0007669"/>
    <property type="project" value="TreeGrafter"/>
</dbReference>
<dbReference type="CDD" id="cd01915">
    <property type="entry name" value="CODH"/>
    <property type="match status" value="1"/>
</dbReference>
<dbReference type="Gene3D" id="1.20.1270.30">
    <property type="match status" value="1"/>
</dbReference>
<dbReference type="Gene3D" id="3.40.50.2030">
    <property type="match status" value="2"/>
</dbReference>
<dbReference type="InterPro" id="IPR016101">
    <property type="entry name" value="CO_DH_a-bundle"/>
</dbReference>
<dbReference type="InterPro" id="IPR010047">
    <property type="entry name" value="CODH"/>
</dbReference>
<dbReference type="InterPro" id="IPR004137">
    <property type="entry name" value="HCP/CODH"/>
</dbReference>
<dbReference type="InterPro" id="IPR016099">
    <property type="entry name" value="Prismane-like_a/b-sand"/>
</dbReference>
<dbReference type="InterPro" id="IPR011254">
    <property type="entry name" value="Prismane-like_sf"/>
</dbReference>
<dbReference type="NCBIfam" id="TIGR01702">
    <property type="entry name" value="CO_DH_cata"/>
    <property type="match status" value="1"/>
</dbReference>
<dbReference type="PANTHER" id="PTHR30109:SF4">
    <property type="entry name" value="CARBON MONOXIDE DEHYDROGENASE"/>
    <property type="match status" value="1"/>
</dbReference>
<dbReference type="PANTHER" id="PTHR30109">
    <property type="entry name" value="HYDROXYLAMINE REDUCTASE"/>
    <property type="match status" value="1"/>
</dbReference>
<dbReference type="Pfam" id="PF03063">
    <property type="entry name" value="Prismane"/>
    <property type="match status" value="1"/>
</dbReference>
<dbReference type="PIRSF" id="PIRSF005023">
    <property type="entry name" value="CODH"/>
    <property type="match status" value="1"/>
</dbReference>
<dbReference type="SUPFAM" id="SSF56821">
    <property type="entry name" value="Prismane protein-like"/>
    <property type="match status" value="1"/>
</dbReference>
<feature type="initiator methionine" description="Removed" evidence="1">
    <location>
        <position position="1"/>
    </location>
</feature>
<feature type="chain" id="PRO_0000157138" description="Carbon monoxide dehydrogenase 2">
    <location>
        <begin position="2"/>
        <end position="636"/>
    </location>
</feature>
<feature type="binding site" evidence="2">
    <location>
        <position position="39"/>
    </location>
    <ligand>
        <name>[4Fe-4S] cluster</name>
        <dbReference type="ChEBI" id="CHEBI:49883"/>
        <label>1</label>
        <note>ligand shared between dimeric partners</note>
    </ligand>
</feature>
<feature type="binding site" evidence="2">
    <location>
        <position position="47"/>
    </location>
    <ligand>
        <name>[4Fe-4S] cluster</name>
        <dbReference type="ChEBI" id="CHEBI:49883"/>
        <label>1</label>
        <note>ligand shared between dimeric partners</note>
    </ligand>
</feature>
<feature type="binding site" evidence="2">
    <location>
        <position position="48"/>
    </location>
    <ligand>
        <name>[4Fe-4S] cluster</name>
        <dbReference type="ChEBI" id="CHEBI:49883"/>
        <label>2</label>
    </ligand>
</feature>
<feature type="binding site" evidence="2">
    <location>
        <position position="51"/>
    </location>
    <ligand>
        <name>[4Fe-4S] cluster</name>
        <dbReference type="ChEBI" id="CHEBI:49883"/>
        <label>2</label>
    </ligand>
</feature>
<feature type="binding site" evidence="2">
    <location>
        <position position="56"/>
    </location>
    <ligand>
        <name>[4Fe-4S] cluster</name>
        <dbReference type="ChEBI" id="CHEBI:49883"/>
        <label>2</label>
    </ligand>
</feature>
<feature type="binding site" evidence="2">
    <location>
        <position position="70"/>
    </location>
    <ligand>
        <name>[4Fe-4S] cluster</name>
        <dbReference type="ChEBI" id="CHEBI:49883"/>
        <label>2</label>
    </ligand>
</feature>
<feature type="binding site" evidence="2 3 4">
    <location>
        <position position="261"/>
    </location>
    <ligand>
        <name>[Ni-4Fe-5S] cluster</name>
        <dbReference type="ChEBI" id="CHEBI:177874"/>
    </ligand>
</feature>
<feature type="binding site" evidence="2 3 4">
    <location>
        <position position="295"/>
    </location>
    <ligand>
        <name>[Ni-4Fe-5S] cluster</name>
        <dbReference type="ChEBI" id="CHEBI:177874"/>
    </ligand>
</feature>
<feature type="binding site" evidence="2 3 4">
    <location>
        <position position="333"/>
    </location>
    <ligand>
        <name>[Ni-4Fe-5S] cluster</name>
        <dbReference type="ChEBI" id="CHEBI:177874"/>
    </ligand>
</feature>
<feature type="binding site" evidence="2 3 4">
    <location>
        <position position="446"/>
    </location>
    <ligand>
        <name>[Ni-4Fe-5S] cluster</name>
        <dbReference type="ChEBI" id="CHEBI:177874"/>
    </ligand>
</feature>
<feature type="binding site" evidence="2 3 4">
    <location>
        <position position="476"/>
    </location>
    <ligand>
        <name>[Ni-4Fe-5S] cluster</name>
        <dbReference type="ChEBI" id="CHEBI:177874"/>
    </ligand>
</feature>
<feature type="binding site" evidence="2 3 4">
    <location>
        <position position="526"/>
    </location>
    <ligand>
        <name>[Ni-4Fe-5S] cluster</name>
        <dbReference type="ChEBI" id="CHEBI:177874"/>
    </ligand>
</feature>
<feature type="sequence conflict" description="In Ref. 1; AAG29809." evidence="5" ref="1">
    <original>D</original>
    <variation>H</variation>
    <location>
        <position position="528"/>
    </location>
</feature>
<feature type="sequence conflict" description="In Ref. 1; AAG29809." evidence="5" ref="1">
    <original>A</original>
    <variation>S</variation>
    <location>
        <position position="532"/>
    </location>
</feature>
<feature type="sequence conflict" description="In Ref. 1; AAG29809." evidence="5" ref="1">
    <original>G</original>
    <variation>W</variation>
    <location>
        <position position="544"/>
    </location>
</feature>
<feature type="sequence conflict" description="In Ref. 1; AAG29809." evidence="5" ref="1">
    <original>L</original>
    <variation>M</variation>
    <location>
        <position position="547"/>
    </location>
</feature>
<feature type="sequence conflict" description="In Ref. 1; AAG29809." evidence="5" ref="1">
    <original>E</original>
    <variation>Q</variation>
    <location>
        <position position="558"/>
    </location>
</feature>
<feature type="sequence conflict" description="In Ref. 1; AAG29809." evidence="5" ref="1">
    <original>L</original>
    <variation>F</variation>
    <location>
        <position position="583"/>
    </location>
</feature>
<feature type="sequence conflict" description="In Ref. 1; AAG29809." evidence="5" ref="1">
    <original>ETA</original>
    <variation>VQQR</variation>
    <location>
        <begin position="615"/>
        <end position="617"/>
    </location>
</feature>
<feature type="sequence conflict" description="In Ref. 1; AAG29809." evidence="5" ref="1">
    <original>W</original>
    <variation>R</variation>
    <location>
        <position position="636"/>
    </location>
</feature>
<feature type="turn" evidence="7">
    <location>
        <begin position="5"/>
        <end position="7"/>
    </location>
</feature>
<feature type="helix" evidence="7">
    <location>
        <begin position="11"/>
        <end position="23"/>
    </location>
</feature>
<feature type="helix" evidence="7">
    <location>
        <begin position="28"/>
        <end position="35"/>
    </location>
</feature>
<feature type="helix" evidence="7">
    <location>
        <begin position="40"/>
        <end position="44"/>
    </location>
</feature>
<feature type="strand" evidence="9">
    <location>
        <begin position="50"/>
        <end position="53"/>
    </location>
</feature>
<feature type="strand" evidence="7">
    <location>
        <begin position="60"/>
        <end position="64"/>
    </location>
</feature>
<feature type="helix" evidence="7">
    <location>
        <begin position="74"/>
        <end position="108"/>
    </location>
</feature>
<feature type="helix" evidence="7">
    <location>
        <begin position="120"/>
        <end position="130"/>
    </location>
</feature>
<feature type="helix" evidence="7">
    <location>
        <begin position="139"/>
        <end position="152"/>
    </location>
</feature>
<feature type="strand" evidence="8">
    <location>
        <begin position="158"/>
        <end position="160"/>
    </location>
</feature>
<feature type="helix" evidence="7">
    <location>
        <begin position="162"/>
        <end position="165"/>
    </location>
</feature>
<feature type="helix" evidence="7">
    <location>
        <begin position="170"/>
        <end position="178"/>
    </location>
</feature>
<feature type="helix" evidence="7">
    <location>
        <begin position="186"/>
        <end position="196"/>
    </location>
</feature>
<feature type="helix" evidence="7">
    <location>
        <begin position="205"/>
        <end position="234"/>
    </location>
</feature>
<feature type="strand" evidence="7">
    <location>
        <begin position="240"/>
        <end position="245"/>
    </location>
</feature>
<feature type="helix" evidence="7">
    <location>
        <begin position="246"/>
        <end position="248"/>
    </location>
</feature>
<feature type="strand" evidence="7">
    <location>
        <begin position="253"/>
        <end position="261"/>
    </location>
</feature>
<feature type="helix" evidence="7">
    <location>
        <begin position="263"/>
        <end position="275"/>
    </location>
</feature>
<feature type="helix" evidence="7">
    <location>
        <begin position="277"/>
        <end position="282"/>
    </location>
</feature>
<feature type="strand" evidence="7">
    <location>
        <begin position="288"/>
        <end position="293"/>
    </location>
</feature>
<feature type="helix" evidence="7">
    <location>
        <begin position="294"/>
        <end position="304"/>
    </location>
</feature>
<feature type="strand" evidence="7">
    <location>
        <begin position="308"/>
        <end position="310"/>
    </location>
</feature>
<feature type="helix" evidence="7">
    <location>
        <begin position="312"/>
        <end position="315"/>
    </location>
</feature>
<feature type="helix" evidence="7">
    <location>
        <begin position="316"/>
        <end position="320"/>
    </location>
</feature>
<feature type="strand" evidence="7">
    <location>
        <begin position="324"/>
        <end position="329"/>
    </location>
</feature>
<feature type="strand" evidence="7">
    <location>
        <begin position="331"/>
        <end position="333"/>
    </location>
</feature>
<feature type="helix" evidence="7">
    <location>
        <begin position="338"/>
        <end position="345"/>
    </location>
</feature>
<feature type="strand" evidence="7">
    <location>
        <begin position="348"/>
        <end position="351"/>
    </location>
</feature>
<feature type="strand" evidence="7">
    <location>
        <begin position="361"/>
        <end position="363"/>
    </location>
</feature>
<feature type="helix" evidence="7">
    <location>
        <begin position="368"/>
        <end position="370"/>
    </location>
</feature>
<feature type="helix" evidence="7">
    <location>
        <begin position="371"/>
        <end position="388"/>
    </location>
</feature>
<feature type="turn" evidence="7">
    <location>
        <begin position="389"/>
        <end position="391"/>
    </location>
</feature>
<feature type="strand" evidence="7">
    <location>
        <begin position="401"/>
        <end position="405"/>
    </location>
</feature>
<feature type="helix" evidence="7">
    <location>
        <begin position="409"/>
        <end position="417"/>
    </location>
</feature>
<feature type="helix" evidence="7">
    <location>
        <begin position="425"/>
        <end position="433"/>
    </location>
</feature>
<feature type="strand" evidence="6">
    <location>
        <begin position="435"/>
        <end position="437"/>
    </location>
</feature>
<feature type="strand" evidence="7">
    <location>
        <begin position="440"/>
        <end position="443"/>
    </location>
</feature>
<feature type="helix" evidence="7">
    <location>
        <begin position="455"/>
        <end position="466"/>
    </location>
</feature>
<feature type="strand" evidence="7">
    <location>
        <begin position="470"/>
        <end position="474"/>
    </location>
</feature>
<feature type="helix" evidence="7">
    <location>
        <begin position="475"/>
        <end position="483"/>
    </location>
</feature>
<feature type="turn" evidence="7">
    <location>
        <begin position="484"/>
        <end position="487"/>
    </location>
</feature>
<feature type="helix" evidence="7">
    <location>
        <begin position="489"/>
        <end position="491"/>
    </location>
</feature>
<feature type="helix" evidence="7">
    <location>
        <begin position="492"/>
        <end position="495"/>
    </location>
</feature>
<feature type="helix" evidence="7">
    <location>
        <begin position="498"/>
        <end position="510"/>
    </location>
</feature>
<feature type="strand" evidence="7">
    <location>
        <begin position="513"/>
        <end position="515"/>
    </location>
</feature>
<feature type="strand" evidence="7">
    <location>
        <begin position="519"/>
        <end position="526"/>
    </location>
</feature>
<feature type="helix" evidence="7">
    <location>
        <begin position="529"/>
        <end position="543"/>
    </location>
</feature>
<feature type="helix" evidence="7">
    <location>
        <begin position="547"/>
        <end position="549"/>
    </location>
</feature>
<feature type="strand" evidence="7">
    <location>
        <begin position="550"/>
        <end position="556"/>
    </location>
</feature>
<feature type="helix" evidence="7">
    <location>
        <begin position="562"/>
        <end position="574"/>
    </location>
</feature>
<feature type="strand" evidence="7">
    <location>
        <begin position="577"/>
        <end position="582"/>
    </location>
</feature>
<feature type="turn" evidence="7">
    <location>
        <begin position="585"/>
        <end position="588"/>
    </location>
</feature>
<feature type="helix" evidence="7">
    <location>
        <begin position="590"/>
        <end position="597"/>
    </location>
</feature>
<feature type="turn" evidence="7">
    <location>
        <begin position="598"/>
        <end position="600"/>
    </location>
</feature>
<feature type="helix" evidence="7">
    <location>
        <begin position="601"/>
        <end position="604"/>
    </location>
</feature>
<feature type="strand" evidence="7">
    <location>
        <begin position="607"/>
        <end position="610"/>
    </location>
</feature>
<feature type="helix" evidence="7">
    <location>
        <begin position="614"/>
        <end position="631"/>
    </location>
</feature>
<accession>Q9F8A8</accession>
<accession>Q3AFX7</accession>
<accession>Q9F8L4</accession>
<keyword id="KW-0002">3D-structure</keyword>
<keyword id="KW-0004">4Fe-4S</keyword>
<keyword id="KW-1003">Cell membrane</keyword>
<keyword id="KW-0963">Cytoplasm</keyword>
<keyword id="KW-0903">Direct protein sequencing</keyword>
<keyword id="KW-0408">Iron</keyword>
<keyword id="KW-0411">Iron-sulfur</keyword>
<keyword id="KW-0472">Membrane</keyword>
<keyword id="KW-0479">Metal-binding</keyword>
<keyword id="KW-0533">Nickel</keyword>
<keyword id="KW-0560">Oxidoreductase</keyword>
<keyword id="KW-1185">Reference proteome</keyword>
<protein>
    <recommendedName>
        <fullName>Carbon monoxide dehydrogenase 2</fullName>
        <shortName>CODH 2</shortName>
        <ecNumber evidence="1 3 4">1.2.7.4</ecNumber>
    </recommendedName>
</protein>
<name>COOS2_CARHZ</name>
<sequence length="636" mass="66914">MAKQNLKSTDRAVQQMLDKAKREGIQTVWDRYEAMKPQCGFGETGLCCRHCLQGPCRINPFGDEPKVGICGATAEVIVARGLDRSIAAGAAGHSGHAKHLAHTLKKAVQGKAASYMIKDRTKLHSIAKRLGIPTEGQKDEDIALEVAKAALADFHEKDTPVLWVTTVLPPSRVKVLSAHGLIPAGIDHEIAEIMHRTSMGCDADAQNLLLGGLRCSLADLAGCYMGTDLADILFGTPAPVVTESNLGVLKADAVNVAVHGHNPVLSDIIVSVSKEMENEARAAGATGINVVGICCTGNEVLMRHGIPACTHSVSQEMAMITGALDAMILDYQCIQPSVATIAECTGTTVITTMEMSKITGATHVNFAEEAAVENAKQILRLAIDTFKRRKGKPVEIPNIKTKVVAGFSTEAIINALSKLNANDPLKPLIDNVVNGNIRGVCLFAGCNNVKVPQDQNFTTIARKLLKQNVLVVATGCGAGALMRHGFMDPANVDELCGDGLKAVLTAIGEANGLGGPLPPVLHMGSCVDNSRAVALVAALANRLGVDLDRLPVVASAAEAMHEKAVAIGTWAVTIGLPTHIGVLPPITGSLPVTQILTSSVKDITGGYFIVELDPETAADKLLAAINERRAGLGLPW</sequence>
<reference key="1">
    <citation type="journal article" date="2000" name="FEMS Microbiol. Lett.">
        <title>Genetic analysis of Carboxydothermus hydrogenoformans carbon monoxide dehydrogenase genes cooF and cooS.</title>
        <authorList>
            <person name="Gonzalez J.M."/>
            <person name="Robb F.T."/>
        </authorList>
    </citation>
    <scope>NUCLEOTIDE SEQUENCE [GENOMIC DNA]</scope>
</reference>
<reference key="2">
    <citation type="journal article" date="2005" name="PLoS Genet.">
        <title>Life in hot carbon monoxide: the complete genome sequence of Carboxydothermus hydrogenoformans Z-2901.</title>
        <authorList>
            <person name="Wu M."/>
            <person name="Ren Q."/>
            <person name="Durkin A.S."/>
            <person name="Daugherty S.C."/>
            <person name="Brinkac L.M."/>
            <person name="Dodson R.J."/>
            <person name="Madupu R."/>
            <person name="Sullivan S.A."/>
            <person name="Kolonay J.F."/>
            <person name="Nelson W.C."/>
            <person name="Tallon L.J."/>
            <person name="Jones K.M."/>
            <person name="Ulrich L.E."/>
            <person name="Gonzalez J.M."/>
            <person name="Zhulin I.B."/>
            <person name="Robb F.T."/>
            <person name="Eisen J.A."/>
        </authorList>
    </citation>
    <scope>NUCLEOTIDE SEQUENCE [LARGE SCALE GENOMIC DNA]</scope>
    <source>
        <strain>ATCC BAA-161 / DSM 6008 / Z-2901</strain>
    </source>
</reference>
<reference key="3">
    <citation type="journal article" date="2001" name="J. Bacteriol.">
        <title>Two membrane-associated NiFeS-carbon monoxide dehydrogenases from the anaerobic carbon-monoxide-utilizing eubacterium Carboxydothermus hydrogenoformans.</title>
        <authorList>
            <person name="Svetlitchnyi V."/>
            <person name="Peschel C."/>
            <person name="Acker G."/>
            <person name="Meyer O."/>
        </authorList>
    </citation>
    <scope>PROTEIN SEQUENCE OF 2-21 AND 164-173</scope>
    <scope>FUNCTION</scope>
    <scope>CATALYTIC ACTIVITY</scope>
    <scope>SUBSTRATE SPECIFICITY</scope>
    <scope>SUBCELLULAR LOCATION</scope>
</reference>
<reference key="4">
    <citation type="journal article" date="2002" name="Eur. J. Biochem.">
        <title>Purification and catalytic properties of a CO-oxidizing:H2-evolving enzyme complex from Carboxydothermus hydrogenoformans.</title>
        <authorList>
            <person name="Soboh B."/>
            <person name="Linder D."/>
            <person name="Hedderich R."/>
        </authorList>
    </citation>
    <scope>PROTEIN SEQUENCE OF 2-16</scope>
</reference>
<reference key="5">
    <citation type="submission" date="2000-03" db="EMBL/GenBank/DDBJ databases">
        <title>A genomic survey of the extreme thermophilic, CO-utilizing bacterium Carboxydothermus hydrogenoformans.</title>
        <authorList>
            <person name="Gonzalez J.M."/>
            <person name="Robb F.T."/>
        </authorList>
    </citation>
    <scope>NUCLEOTIDE SEQUENCE [GENOMIC DNA] OF 217-429</scope>
</reference>
<reference key="6">
    <citation type="journal article" date="2001" name="Science">
        <title>Crystal structure of a carbon monoxide dehydrogenase reveals a [Ni-4Fe-5S] cluster.</title>
        <authorList>
            <person name="Dobbek H."/>
            <person name="Svetlitchnyi V."/>
            <person name="Gremer L."/>
            <person name="Huber R."/>
            <person name="Meyer O."/>
        </authorList>
    </citation>
    <scope>X-RAY CRYSTALLOGRAPHY (1.6 ANGSTROMS) IN COMPLEX WITH IRON-SULFUR (4FE-4S) AND NICKEL-IRON-SULFUR CLUSTER (NI-4FE-5S)</scope>
    <scope>COFACTOR</scope>
    <scope>SUBUNIT</scope>
</reference>
<reference key="7">
    <citation type="journal article" date="2004" name="J. Am. Chem. Soc.">
        <title>Carbon monoxide induced decomposition of the active site [Ni-4Fe-5S] cluster of CO dehydrogenase.</title>
        <authorList>
            <person name="Dobbek H."/>
            <person name="Svetlitchnyi V."/>
            <person name="Liss J."/>
            <person name="Meyer O."/>
        </authorList>
    </citation>
    <scope>X-RAY CRYSTALLOGRAPHY (1.10 ANGSTROMS) IN COMPLEX WITH IRON-SULFUR (4FE-4S) AND NICKEL-IRON-SULFUR CLUSTER (NI-4FE-5S)</scope>
    <scope>COFACTOR</scope>
    <scope>CATALYTIC ACTIVITY</scope>
</reference>
<reference key="8">
    <citation type="journal article" date="2007" name="Science">
        <title>Carbon dioxide activation at the Ni,Fe-cluster of anaerobic carbon monoxide dehydrogenase.</title>
        <authorList>
            <person name="Jeoung J.H."/>
            <person name="Dobbek H."/>
        </authorList>
    </citation>
    <scope>X-RAY CRYSTALLOGRAPHY (1.40 ANGSTROMS) OF 4-636 IN COMPLEX WITH IRON-SULFUR (4FE-4S); NICKEL-IRON-SULFUR CLUSTER (NI-4FE-5S) AND CARBON DIOXIDE</scope>
    <scope>COFACTOR</scope>
    <scope>CATALYTIC ACTIVITY</scope>
</reference>